<dbReference type="EC" id="2.4.2.17" evidence="1"/>
<dbReference type="EMBL" id="CP001393">
    <property type="protein sequence ID" value="ACM60577.1"/>
    <property type="molecule type" value="Genomic_DNA"/>
</dbReference>
<dbReference type="RefSeq" id="WP_013430203.1">
    <property type="nucleotide sequence ID" value="NC_012034.1"/>
</dbReference>
<dbReference type="SMR" id="B9MJR9"/>
<dbReference type="STRING" id="521460.Athe_1479"/>
<dbReference type="GeneID" id="31772824"/>
<dbReference type="KEGG" id="ate:Athe_1479"/>
<dbReference type="eggNOG" id="COG0040">
    <property type="taxonomic scope" value="Bacteria"/>
</dbReference>
<dbReference type="HOGENOM" id="CLU_038115_2_0_9"/>
<dbReference type="UniPathway" id="UPA00031">
    <property type="reaction ID" value="UER00006"/>
</dbReference>
<dbReference type="Proteomes" id="UP000007723">
    <property type="component" value="Chromosome"/>
</dbReference>
<dbReference type="GO" id="GO:0005737">
    <property type="term" value="C:cytoplasm"/>
    <property type="evidence" value="ECO:0007669"/>
    <property type="project" value="UniProtKB-SubCell"/>
</dbReference>
<dbReference type="GO" id="GO:0005524">
    <property type="term" value="F:ATP binding"/>
    <property type="evidence" value="ECO:0007669"/>
    <property type="project" value="UniProtKB-KW"/>
</dbReference>
<dbReference type="GO" id="GO:0003879">
    <property type="term" value="F:ATP phosphoribosyltransferase activity"/>
    <property type="evidence" value="ECO:0007669"/>
    <property type="project" value="UniProtKB-UniRule"/>
</dbReference>
<dbReference type="GO" id="GO:0000105">
    <property type="term" value="P:L-histidine biosynthetic process"/>
    <property type="evidence" value="ECO:0007669"/>
    <property type="project" value="UniProtKB-UniRule"/>
</dbReference>
<dbReference type="CDD" id="cd13595">
    <property type="entry name" value="PBP2_HisGs"/>
    <property type="match status" value="1"/>
</dbReference>
<dbReference type="FunFam" id="3.40.190.10:FF:000008">
    <property type="entry name" value="ATP phosphoribosyltransferase"/>
    <property type="match status" value="1"/>
</dbReference>
<dbReference type="FunFam" id="3.40.190.10:FF:000011">
    <property type="entry name" value="ATP phosphoribosyltransferase"/>
    <property type="match status" value="1"/>
</dbReference>
<dbReference type="Gene3D" id="3.40.190.10">
    <property type="entry name" value="Periplasmic binding protein-like II"/>
    <property type="match status" value="2"/>
</dbReference>
<dbReference type="HAMAP" id="MF_01018">
    <property type="entry name" value="HisG_Short"/>
    <property type="match status" value="1"/>
</dbReference>
<dbReference type="InterPro" id="IPR013820">
    <property type="entry name" value="ATP_PRibTrfase_cat"/>
</dbReference>
<dbReference type="InterPro" id="IPR018198">
    <property type="entry name" value="ATP_PRibTrfase_CS"/>
</dbReference>
<dbReference type="InterPro" id="IPR001348">
    <property type="entry name" value="ATP_PRibTrfase_HisG"/>
</dbReference>
<dbReference type="InterPro" id="IPR024893">
    <property type="entry name" value="ATP_PRibTrfase_HisG_short"/>
</dbReference>
<dbReference type="NCBIfam" id="TIGR00070">
    <property type="entry name" value="hisG"/>
    <property type="match status" value="1"/>
</dbReference>
<dbReference type="PANTHER" id="PTHR21403:SF8">
    <property type="entry name" value="ATP PHOSPHORIBOSYLTRANSFERASE"/>
    <property type="match status" value="1"/>
</dbReference>
<dbReference type="PANTHER" id="PTHR21403">
    <property type="entry name" value="ATP PHOSPHORIBOSYLTRANSFERASE ATP-PRTASE"/>
    <property type="match status" value="1"/>
</dbReference>
<dbReference type="Pfam" id="PF01634">
    <property type="entry name" value="HisG"/>
    <property type="match status" value="1"/>
</dbReference>
<dbReference type="SUPFAM" id="SSF53850">
    <property type="entry name" value="Periplasmic binding protein-like II"/>
    <property type="match status" value="1"/>
</dbReference>
<dbReference type="PROSITE" id="PS01316">
    <property type="entry name" value="ATP_P_PHORIBOSYLTR"/>
    <property type="match status" value="1"/>
</dbReference>
<keyword id="KW-0028">Amino-acid biosynthesis</keyword>
<keyword id="KW-0067">ATP-binding</keyword>
<keyword id="KW-0963">Cytoplasm</keyword>
<keyword id="KW-0328">Glycosyltransferase</keyword>
<keyword id="KW-0368">Histidine biosynthesis</keyword>
<keyword id="KW-0547">Nucleotide-binding</keyword>
<keyword id="KW-0808">Transferase</keyword>
<reference key="1">
    <citation type="submission" date="2009-01" db="EMBL/GenBank/DDBJ databases">
        <title>Complete sequence of chromosome of Caldicellulosiruptor becscii DSM 6725.</title>
        <authorList>
            <person name="Lucas S."/>
            <person name="Copeland A."/>
            <person name="Lapidus A."/>
            <person name="Glavina del Rio T."/>
            <person name="Tice H."/>
            <person name="Bruce D."/>
            <person name="Goodwin L."/>
            <person name="Pitluck S."/>
            <person name="Sims D."/>
            <person name="Meincke L."/>
            <person name="Brettin T."/>
            <person name="Detter J.C."/>
            <person name="Han C."/>
            <person name="Larimer F."/>
            <person name="Land M."/>
            <person name="Hauser L."/>
            <person name="Kyrpides N."/>
            <person name="Ovchinnikova G."/>
            <person name="Kataeva I."/>
            <person name="Adams M.W.W."/>
        </authorList>
    </citation>
    <scope>NUCLEOTIDE SEQUENCE [LARGE SCALE GENOMIC DNA]</scope>
    <source>
        <strain>ATCC BAA-1888 / DSM 6725 / KCTC 15123 / Z-1320</strain>
    </source>
</reference>
<comment type="function">
    <text evidence="1">Catalyzes the condensation of ATP and 5-phosphoribose 1-diphosphate to form N'-(5'-phosphoribosyl)-ATP (PR-ATP). Has a crucial role in the pathway because the rate of histidine biosynthesis seems to be controlled primarily by regulation of HisG enzymatic activity.</text>
</comment>
<comment type="catalytic activity">
    <reaction evidence="1">
        <text>1-(5-phospho-beta-D-ribosyl)-ATP + diphosphate = 5-phospho-alpha-D-ribose 1-diphosphate + ATP</text>
        <dbReference type="Rhea" id="RHEA:18473"/>
        <dbReference type="ChEBI" id="CHEBI:30616"/>
        <dbReference type="ChEBI" id="CHEBI:33019"/>
        <dbReference type="ChEBI" id="CHEBI:58017"/>
        <dbReference type="ChEBI" id="CHEBI:73183"/>
        <dbReference type="EC" id="2.4.2.17"/>
    </reaction>
</comment>
<comment type="pathway">
    <text evidence="1">Amino-acid biosynthesis; L-histidine biosynthesis; L-histidine from 5-phospho-alpha-D-ribose 1-diphosphate: step 1/9.</text>
</comment>
<comment type="subunit">
    <text evidence="1">Heteromultimer composed of HisG and HisZ subunits.</text>
</comment>
<comment type="subcellular location">
    <subcellularLocation>
        <location evidence="1">Cytoplasm</location>
    </subcellularLocation>
</comment>
<comment type="domain">
    <text>Lacks the C-terminal regulatory region which is replaced by HisZ.</text>
</comment>
<comment type="similarity">
    <text evidence="1">Belongs to the ATP phosphoribosyltransferase family. Short subfamily.</text>
</comment>
<protein>
    <recommendedName>
        <fullName evidence="1">ATP phosphoribosyltransferase</fullName>
        <shortName evidence="1">ATP-PRT</shortName>
        <shortName evidence="1">ATP-PRTase</shortName>
        <ecNumber evidence="1">2.4.2.17</ecNumber>
    </recommendedName>
</protein>
<name>HIS1_CALBD</name>
<accession>B9MJR9</accession>
<organism>
    <name type="scientific">Caldicellulosiruptor bescii (strain ATCC BAA-1888 / DSM 6725 / KCTC 15123 / Z-1320)</name>
    <name type="common">Anaerocellum thermophilum</name>
    <dbReference type="NCBI Taxonomy" id="521460"/>
    <lineage>
        <taxon>Bacteria</taxon>
        <taxon>Bacillati</taxon>
        <taxon>Bacillota</taxon>
        <taxon>Bacillota incertae sedis</taxon>
        <taxon>Caldicellulosiruptorales</taxon>
        <taxon>Caldicellulosiruptoraceae</taxon>
        <taxon>Caldicellulosiruptor</taxon>
    </lineage>
</organism>
<evidence type="ECO:0000255" key="1">
    <source>
        <dbReference type="HAMAP-Rule" id="MF_01018"/>
    </source>
</evidence>
<sequence length="209" mass="23448">MITIALPKGRLAQQTVELLKRASLVDIDISEESRKLIIEDTQNSLRFLMVKPFDVPTYVEYGVADVGVVGKDVLLEMNKRVYELLDLKIGKCFVALAGPKGISEALLKKPDKTIATKFPNIAKEYFENVRGEDVKIIKLNGSVELAPILGLSDMIVDIVESGRTLKENGLEVYEKLYDISARLIANRASLKLKTQIDDIINRLERMIEE</sequence>
<proteinExistence type="inferred from homology"/>
<feature type="chain" id="PRO_1000213250" description="ATP phosphoribosyltransferase">
    <location>
        <begin position="1"/>
        <end position="209"/>
    </location>
</feature>
<gene>
    <name evidence="1" type="primary">hisG</name>
    <name type="ordered locus">Athe_1479</name>
</gene>